<dbReference type="EMBL" id="U89173">
    <property type="protein sequence ID" value="AAC35374.1"/>
    <property type="molecule type" value="Genomic_DNA"/>
</dbReference>
<dbReference type="SMR" id="O79925"/>
<dbReference type="GO" id="GO:0005743">
    <property type="term" value="C:mitochondrial inner membrane"/>
    <property type="evidence" value="ECO:0007669"/>
    <property type="project" value="UniProtKB-SubCell"/>
</dbReference>
<dbReference type="GO" id="GO:0045275">
    <property type="term" value="C:respiratory chain complex III"/>
    <property type="evidence" value="ECO:0007669"/>
    <property type="project" value="InterPro"/>
</dbReference>
<dbReference type="GO" id="GO:0046872">
    <property type="term" value="F:metal ion binding"/>
    <property type="evidence" value="ECO:0007669"/>
    <property type="project" value="UniProtKB-KW"/>
</dbReference>
<dbReference type="GO" id="GO:0008121">
    <property type="term" value="F:ubiquinol-cytochrome-c reductase activity"/>
    <property type="evidence" value="ECO:0007669"/>
    <property type="project" value="InterPro"/>
</dbReference>
<dbReference type="GO" id="GO:0006122">
    <property type="term" value="P:mitochondrial electron transport, ubiquinol to cytochrome c"/>
    <property type="evidence" value="ECO:0007669"/>
    <property type="project" value="TreeGrafter"/>
</dbReference>
<dbReference type="CDD" id="cd00290">
    <property type="entry name" value="cytochrome_b_C"/>
    <property type="match status" value="1"/>
</dbReference>
<dbReference type="CDD" id="cd00284">
    <property type="entry name" value="Cytochrome_b_N"/>
    <property type="match status" value="1"/>
</dbReference>
<dbReference type="FunFam" id="1.20.810.10:FF:000002">
    <property type="entry name" value="Cytochrome b"/>
    <property type="match status" value="1"/>
</dbReference>
<dbReference type="Gene3D" id="1.20.810.10">
    <property type="entry name" value="Cytochrome Bc1 Complex, Chain C"/>
    <property type="match status" value="1"/>
</dbReference>
<dbReference type="InterPro" id="IPR005798">
    <property type="entry name" value="Cyt_b/b6_C"/>
</dbReference>
<dbReference type="InterPro" id="IPR036150">
    <property type="entry name" value="Cyt_b/b6_C_sf"/>
</dbReference>
<dbReference type="InterPro" id="IPR005797">
    <property type="entry name" value="Cyt_b/b6_N"/>
</dbReference>
<dbReference type="InterPro" id="IPR027387">
    <property type="entry name" value="Cytb/b6-like_sf"/>
</dbReference>
<dbReference type="InterPro" id="IPR030689">
    <property type="entry name" value="Cytochrome_b"/>
</dbReference>
<dbReference type="InterPro" id="IPR048260">
    <property type="entry name" value="Cytochrome_b_C_euk/bac"/>
</dbReference>
<dbReference type="InterPro" id="IPR048259">
    <property type="entry name" value="Cytochrome_b_N_euk/bac"/>
</dbReference>
<dbReference type="InterPro" id="IPR016174">
    <property type="entry name" value="Di-haem_cyt_TM"/>
</dbReference>
<dbReference type="PANTHER" id="PTHR19271">
    <property type="entry name" value="CYTOCHROME B"/>
    <property type="match status" value="1"/>
</dbReference>
<dbReference type="PANTHER" id="PTHR19271:SF16">
    <property type="entry name" value="CYTOCHROME B"/>
    <property type="match status" value="1"/>
</dbReference>
<dbReference type="Pfam" id="PF00032">
    <property type="entry name" value="Cytochrom_B_C"/>
    <property type="match status" value="1"/>
</dbReference>
<dbReference type="Pfam" id="PF00033">
    <property type="entry name" value="Cytochrome_B"/>
    <property type="match status" value="1"/>
</dbReference>
<dbReference type="PIRSF" id="PIRSF038885">
    <property type="entry name" value="COB"/>
    <property type="match status" value="1"/>
</dbReference>
<dbReference type="SUPFAM" id="SSF81648">
    <property type="entry name" value="a domain/subunit of cytochrome bc1 complex (Ubiquinol-cytochrome c reductase)"/>
    <property type="match status" value="1"/>
</dbReference>
<dbReference type="SUPFAM" id="SSF81342">
    <property type="entry name" value="Transmembrane di-heme cytochromes"/>
    <property type="match status" value="1"/>
</dbReference>
<dbReference type="PROSITE" id="PS51003">
    <property type="entry name" value="CYTB_CTER"/>
    <property type="match status" value="1"/>
</dbReference>
<dbReference type="PROSITE" id="PS51002">
    <property type="entry name" value="CYTB_NTER"/>
    <property type="match status" value="1"/>
</dbReference>
<name>CYB_COLLE</name>
<comment type="function">
    <text evidence="2">Component of the ubiquinol-cytochrome c reductase complex (complex III or cytochrome b-c1 complex) that is part of the mitochondrial respiratory chain. The b-c1 complex mediates electron transfer from ubiquinol to cytochrome c. Contributes to the generation of a proton gradient across the mitochondrial membrane that is then used for ATP synthesis.</text>
</comment>
<comment type="cofactor">
    <cofactor evidence="2">
        <name>heme b</name>
        <dbReference type="ChEBI" id="CHEBI:60344"/>
    </cofactor>
    <text evidence="2">Binds 2 heme b groups non-covalently.</text>
</comment>
<comment type="subunit">
    <text evidence="2">The cytochrome bc1 complex contains 11 subunits: 3 respiratory subunits (MT-CYB, CYC1 and UQCRFS1), 2 core proteins (UQCRC1 and UQCRC2) and 6 low-molecular weight proteins (UQCRH/QCR6, UQCRB/QCR7, UQCRQ/QCR8, UQCR10/QCR9, UQCR11/QCR10 and a cleavage product of UQCRFS1). This cytochrome bc1 complex then forms a dimer.</text>
</comment>
<comment type="subcellular location">
    <subcellularLocation>
        <location evidence="2">Mitochondrion inner membrane</location>
        <topology evidence="2">Multi-pass membrane protein</topology>
    </subcellularLocation>
</comment>
<comment type="miscellaneous">
    <text evidence="1">Heme 1 (or BL or b562) is low-potential and absorbs at about 562 nm, and heme 2 (or BH or b566) is high-potential and absorbs at about 566 nm.</text>
</comment>
<comment type="similarity">
    <text evidence="3 4">Belongs to the cytochrome b family.</text>
</comment>
<comment type="caution">
    <text evidence="2">The full-length protein contains only eight transmembrane helices, not nine as predicted by bioinformatics tools.</text>
</comment>
<organism>
    <name type="scientific">Colius leucocephalus</name>
    <name type="common">White-headed mousebird</name>
    <dbReference type="NCBI Taxonomy" id="57411"/>
    <lineage>
        <taxon>Eukaryota</taxon>
        <taxon>Metazoa</taxon>
        <taxon>Chordata</taxon>
        <taxon>Craniata</taxon>
        <taxon>Vertebrata</taxon>
        <taxon>Euteleostomi</taxon>
        <taxon>Archelosauria</taxon>
        <taxon>Archosauria</taxon>
        <taxon>Dinosauria</taxon>
        <taxon>Saurischia</taxon>
        <taxon>Theropoda</taxon>
        <taxon>Coelurosauria</taxon>
        <taxon>Aves</taxon>
        <taxon>Neognathae</taxon>
        <taxon>Neoaves</taxon>
        <taxon>Telluraves</taxon>
        <taxon>Coraciimorphae</taxon>
        <taxon>Coliiformes</taxon>
        <taxon>Coliidae</taxon>
        <taxon>Colius</taxon>
    </lineage>
</organism>
<geneLocation type="mitochondrion"/>
<protein>
    <recommendedName>
        <fullName>Cytochrome b</fullName>
    </recommendedName>
    <alternativeName>
        <fullName>Complex III subunit 3</fullName>
    </alternativeName>
    <alternativeName>
        <fullName>Complex III subunit III</fullName>
    </alternativeName>
    <alternativeName>
        <fullName>Cytochrome b-c1 complex subunit 3</fullName>
    </alternativeName>
    <alternativeName>
        <fullName>Ubiquinol-cytochrome-c reductase complex cytochrome b subunit</fullName>
    </alternativeName>
</protein>
<proteinExistence type="inferred from homology"/>
<gene>
    <name type="primary">MT-CYB</name>
    <name type="synonym">COB</name>
    <name type="synonym">CYTB</name>
    <name type="synonym">MTCYB</name>
</gene>
<feature type="chain" id="PRO_0000060800" description="Cytochrome b">
    <location>
        <begin position="1"/>
        <end position="380"/>
    </location>
</feature>
<feature type="transmembrane region" description="Helical" evidence="2">
    <location>
        <begin position="34"/>
        <end position="54"/>
    </location>
</feature>
<feature type="transmembrane region" description="Helical" evidence="2">
    <location>
        <begin position="78"/>
        <end position="99"/>
    </location>
</feature>
<feature type="transmembrane region" description="Helical" evidence="2">
    <location>
        <begin position="114"/>
        <end position="134"/>
    </location>
</feature>
<feature type="transmembrane region" description="Helical" evidence="2">
    <location>
        <begin position="179"/>
        <end position="199"/>
    </location>
</feature>
<feature type="transmembrane region" description="Helical" evidence="2">
    <location>
        <begin position="227"/>
        <end position="247"/>
    </location>
</feature>
<feature type="transmembrane region" description="Helical" evidence="2">
    <location>
        <begin position="289"/>
        <end position="309"/>
    </location>
</feature>
<feature type="transmembrane region" description="Helical" evidence="2">
    <location>
        <begin position="321"/>
        <end position="341"/>
    </location>
</feature>
<feature type="transmembrane region" description="Helical" evidence="2">
    <location>
        <begin position="348"/>
        <end position="368"/>
    </location>
</feature>
<feature type="binding site" description="axial binding residue" evidence="2">
    <location>
        <position position="84"/>
    </location>
    <ligand>
        <name>heme b</name>
        <dbReference type="ChEBI" id="CHEBI:60344"/>
        <label>b562</label>
    </ligand>
    <ligandPart>
        <name>Fe</name>
        <dbReference type="ChEBI" id="CHEBI:18248"/>
    </ligandPart>
</feature>
<feature type="binding site" description="axial binding residue" evidence="2">
    <location>
        <position position="98"/>
    </location>
    <ligand>
        <name>heme b</name>
        <dbReference type="ChEBI" id="CHEBI:60344"/>
        <label>b566</label>
    </ligand>
    <ligandPart>
        <name>Fe</name>
        <dbReference type="ChEBI" id="CHEBI:18248"/>
    </ligandPart>
</feature>
<feature type="binding site" description="axial binding residue" evidence="2">
    <location>
        <position position="183"/>
    </location>
    <ligand>
        <name>heme b</name>
        <dbReference type="ChEBI" id="CHEBI:60344"/>
        <label>b562</label>
    </ligand>
    <ligandPart>
        <name>Fe</name>
        <dbReference type="ChEBI" id="CHEBI:18248"/>
    </ligandPart>
</feature>
<feature type="binding site" description="axial binding residue" evidence="2">
    <location>
        <position position="197"/>
    </location>
    <ligand>
        <name>heme b</name>
        <dbReference type="ChEBI" id="CHEBI:60344"/>
        <label>b566</label>
    </ligand>
    <ligandPart>
        <name>Fe</name>
        <dbReference type="ChEBI" id="CHEBI:18248"/>
    </ligandPart>
</feature>
<feature type="binding site" evidence="2">
    <location>
        <position position="202"/>
    </location>
    <ligand>
        <name>a ubiquinone</name>
        <dbReference type="ChEBI" id="CHEBI:16389"/>
    </ligand>
</feature>
<sequence length="380" mass="42796">MAPNLRKSHPLLKMVNNSLIDLPTPPNISAWWNFGSLLGICLLTQILTGLLLAAHYTADTTLAFSSVAHTCRNVQYGWLIRNLHANGASFFFICIYFHIGRGFYYGSYLYKETWNTGVILLLSLMATAFVGYVLPWGQMSFWGATVITNLFSAVPYIGQTLVEWAWGGFSVDNPTLTRFFTLHFLLPFMIAGITLIHLTFLHESGSNNPLGIVSNCDKIPFHPYFSLKDILGFTLMILPLTTLALFSPNLLGDPENFTPANPLVTPPHIKPEWYFLFAYAILRSIPNKLGGVLALAASVLVLFLCPLLHKSKQRTMTFRPLSQLLFWLLTANLFILTWVGSQPVEHPFIIIGQLASITYFMIILILFPLIRTLENKMLKY</sequence>
<evidence type="ECO:0000250" key="1"/>
<evidence type="ECO:0000250" key="2">
    <source>
        <dbReference type="UniProtKB" id="P00157"/>
    </source>
</evidence>
<evidence type="ECO:0000255" key="3">
    <source>
        <dbReference type="PROSITE-ProRule" id="PRU00967"/>
    </source>
</evidence>
<evidence type="ECO:0000255" key="4">
    <source>
        <dbReference type="PROSITE-ProRule" id="PRU00968"/>
    </source>
</evidence>
<accession>O79925</accession>
<keyword id="KW-0249">Electron transport</keyword>
<keyword id="KW-0349">Heme</keyword>
<keyword id="KW-0408">Iron</keyword>
<keyword id="KW-0472">Membrane</keyword>
<keyword id="KW-0479">Metal-binding</keyword>
<keyword id="KW-0496">Mitochondrion</keyword>
<keyword id="KW-0999">Mitochondrion inner membrane</keyword>
<keyword id="KW-0679">Respiratory chain</keyword>
<keyword id="KW-0812">Transmembrane</keyword>
<keyword id="KW-1133">Transmembrane helix</keyword>
<keyword id="KW-0813">Transport</keyword>
<keyword id="KW-0830">Ubiquinone</keyword>
<reference key="1">
    <citation type="journal article" date="2000" name="Mol. Phylogenet. Evol.">
        <title>Higher-level phylogeny of trogoniformes.</title>
        <authorList>
            <person name="Espinosa de los Monteros A."/>
        </authorList>
    </citation>
    <scope>NUCLEOTIDE SEQUENCE [GENOMIC DNA]</scope>
</reference>